<gene>
    <name evidence="1" type="primary">hemL</name>
    <name type="ordered locus">azo3449</name>
</gene>
<accession>A1KB59</accession>
<comment type="catalytic activity">
    <reaction evidence="1">
        <text>(S)-4-amino-5-oxopentanoate = 5-aminolevulinate</text>
        <dbReference type="Rhea" id="RHEA:14265"/>
        <dbReference type="ChEBI" id="CHEBI:57501"/>
        <dbReference type="ChEBI" id="CHEBI:356416"/>
        <dbReference type="EC" id="5.4.3.8"/>
    </reaction>
</comment>
<comment type="cofactor">
    <cofactor evidence="1">
        <name>pyridoxal 5'-phosphate</name>
        <dbReference type="ChEBI" id="CHEBI:597326"/>
    </cofactor>
</comment>
<comment type="pathway">
    <text evidence="1">Porphyrin-containing compound metabolism; protoporphyrin-IX biosynthesis; 5-aminolevulinate from L-glutamyl-tRNA(Glu): step 2/2.</text>
</comment>
<comment type="subunit">
    <text evidence="1">Homodimer.</text>
</comment>
<comment type="subcellular location">
    <subcellularLocation>
        <location evidence="1">Cytoplasm</location>
    </subcellularLocation>
</comment>
<comment type="similarity">
    <text evidence="1">Belongs to the class-III pyridoxal-phosphate-dependent aminotransferase family. HemL subfamily.</text>
</comment>
<evidence type="ECO:0000255" key="1">
    <source>
        <dbReference type="HAMAP-Rule" id="MF_00375"/>
    </source>
</evidence>
<feature type="chain" id="PRO_0000300893" description="Glutamate-1-semialdehyde 2,1-aminomutase">
    <location>
        <begin position="1"/>
        <end position="424"/>
    </location>
</feature>
<feature type="modified residue" description="N6-(pyridoxal phosphate)lysine" evidence="1">
    <location>
        <position position="266"/>
    </location>
</feature>
<protein>
    <recommendedName>
        <fullName evidence="1">Glutamate-1-semialdehyde 2,1-aminomutase</fullName>
        <shortName evidence="1">GSA</shortName>
        <ecNumber evidence="1">5.4.3.8</ecNumber>
    </recommendedName>
    <alternativeName>
        <fullName evidence="1">Glutamate-1-semialdehyde aminotransferase</fullName>
        <shortName evidence="1">GSA-AT</shortName>
    </alternativeName>
</protein>
<reference key="1">
    <citation type="journal article" date="2006" name="Nat. Biotechnol.">
        <title>Complete genome of the mutualistic, N2-fixing grass endophyte Azoarcus sp. strain BH72.</title>
        <authorList>
            <person name="Krause A."/>
            <person name="Ramakumar A."/>
            <person name="Bartels D."/>
            <person name="Battistoni F."/>
            <person name="Bekel T."/>
            <person name="Boch J."/>
            <person name="Boehm M."/>
            <person name="Friedrich F."/>
            <person name="Hurek T."/>
            <person name="Krause L."/>
            <person name="Linke B."/>
            <person name="McHardy A.C."/>
            <person name="Sarkar A."/>
            <person name="Schneiker S."/>
            <person name="Syed A.A."/>
            <person name="Thauer R."/>
            <person name="Vorhoelter F.-J."/>
            <person name="Weidner S."/>
            <person name="Puehler A."/>
            <person name="Reinhold-Hurek B."/>
            <person name="Kaiser O."/>
            <person name="Goesmann A."/>
        </authorList>
    </citation>
    <scope>NUCLEOTIDE SEQUENCE [LARGE SCALE GENOMIC DNA]</scope>
    <source>
        <strain>BH72</strain>
    </source>
</reference>
<dbReference type="EC" id="5.4.3.8" evidence="1"/>
<dbReference type="EMBL" id="AM406670">
    <property type="protein sequence ID" value="CAL96065.1"/>
    <property type="molecule type" value="Genomic_DNA"/>
</dbReference>
<dbReference type="RefSeq" id="WP_011767171.1">
    <property type="nucleotide sequence ID" value="NC_008702.1"/>
</dbReference>
<dbReference type="SMR" id="A1KB59"/>
<dbReference type="STRING" id="62928.azo3449"/>
<dbReference type="KEGG" id="azo:azo3449"/>
<dbReference type="eggNOG" id="COG0001">
    <property type="taxonomic scope" value="Bacteria"/>
</dbReference>
<dbReference type="HOGENOM" id="CLU_016922_1_5_4"/>
<dbReference type="UniPathway" id="UPA00251">
    <property type="reaction ID" value="UER00317"/>
</dbReference>
<dbReference type="Proteomes" id="UP000002588">
    <property type="component" value="Chromosome"/>
</dbReference>
<dbReference type="GO" id="GO:0005737">
    <property type="term" value="C:cytoplasm"/>
    <property type="evidence" value="ECO:0007669"/>
    <property type="project" value="UniProtKB-SubCell"/>
</dbReference>
<dbReference type="GO" id="GO:0042286">
    <property type="term" value="F:glutamate-1-semialdehyde 2,1-aminomutase activity"/>
    <property type="evidence" value="ECO:0007669"/>
    <property type="project" value="UniProtKB-UniRule"/>
</dbReference>
<dbReference type="GO" id="GO:0030170">
    <property type="term" value="F:pyridoxal phosphate binding"/>
    <property type="evidence" value="ECO:0007669"/>
    <property type="project" value="InterPro"/>
</dbReference>
<dbReference type="GO" id="GO:0008483">
    <property type="term" value="F:transaminase activity"/>
    <property type="evidence" value="ECO:0007669"/>
    <property type="project" value="InterPro"/>
</dbReference>
<dbReference type="GO" id="GO:0006782">
    <property type="term" value="P:protoporphyrinogen IX biosynthetic process"/>
    <property type="evidence" value="ECO:0007669"/>
    <property type="project" value="UniProtKB-UniRule"/>
</dbReference>
<dbReference type="CDD" id="cd00610">
    <property type="entry name" value="OAT_like"/>
    <property type="match status" value="1"/>
</dbReference>
<dbReference type="FunFam" id="3.40.640.10:FF:000021">
    <property type="entry name" value="Glutamate-1-semialdehyde 2,1-aminomutase"/>
    <property type="match status" value="1"/>
</dbReference>
<dbReference type="Gene3D" id="3.90.1150.10">
    <property type="entry name" value="Aspartate Aminotransferase, domain 1"/>
    <property type="match status" value="1"/>
</dbReference>
<dbReference type="Gene3D" id="3.40.640.10">
    <property type="entry name" value="Type I PLP-dependent aspartate aminotransferase-like (Major domain)"/>
    <property type="match status" value="1"/>
</dbReference>
<dbReference type="HAMAP" id="MF_00375">
    <property type="entry name" value="HemL_aminotrans_3"/>
    <property type="match status" value="1"/>
</dbReference>
<dbReference type="InterPro" id="IPR004639">
    <property type="entry name" value="4pyrrol_synth_GluAld_NH2Trfase"/>
</dbReference>
<dbReference type="InterPro" id="IPR005814">
    <property type="entry name" value="Aminotrans_3"/>
</dbReference>
<dbReference type="InterPro" id="IPR049704">
    <property type="entry name" value="Aminotrans_3_PPA_site"/>
</dbReference>
<dbReference type="InterPro" id="IPR015424">
    <property type="entry name" value="PyrdxlP-dep_Trfase"/>
</dbReference>
<dbReference type="InterPro" id="IPR015421">
    <property type="entry name" value="PyrdxlP-dep_Trfase_major"/>
</dbReference>
<dbReference type="InterPro" id="IPR015422">
    <property type="entry name" value="PyrdxlP-dep_Trfase_small"/>
</dbReference>
<dbReference type="NCBIfam" id="TIGR00713">
    <property type="entry name" value="hemL"/>
    <property type="match status" value="1"/>
</dbReference>
<dbReference type="NCBIfam" id="NF000818">
    <property type="entry name" value="PRK00062.1"/>
    <property type="match status" value="1"/>
</dbReference>
<dbReference type="PANTHER" id="PTHR43713">
    <property type="entry name" value="GLUTAMATE-1-SEMIALDEHYDE 2,1-AMINOMUTASE"/>
    <property type="match status" value="1"/>
</dbReference>
<dbReference type="PANTHER" id="PTHR43713:SF3">
    <property type="entry name" value="GLUTAMATE-1-SEMIALDEHYDE 2,1-AMINOMUTASE 1, CHLOROPLASTIC-RELATED"/>
    <property type="match status" value="1"/>
</dbReference>
<dbReference type="Pfam" id="PF00202">
    <property type="entry name" value="Aminotran_3"/>
    <property type="match status" value="1"/>
</dbReference>
<dbReference type="SUPFAM" id="SSF53383">
    <property type="entry name" value="PLP-dependent transferases"/>
    <property type="match status" value="1"/>
</dbReference>
<dbReference type="PROSITE" id="PS00600">
    <property type="entry name" value="AA_TRANSFER_CLASS_3"/>
    <property type="match status" value="1"/>
</dbReference>
<proteinExistence type="inferred from homology"/>
<sequence>MTSRNEALFSRAQRSIPGGVNSPVRAFRSVGGTPRFIERAEGARVWDADGKAYIDYVGSWGPAIAGHSHPAIVEAVREAALRGLSFGAPTESEVEMAELLCALLPSIEMLRLVSSGTEATMSAIRLARGFTGRDDIIKFEGCYHGHADSLLVKAGSGLLTFGNPSSGGVPADFAHHTVVLDYNDLDQVETVFKARGDQIAAVIVEPVAGNMNLIKPRPGFLEGLRRLCTEYGAVLIFDEVMTGFRVGPQGVQGLYGITPDLTTLGKVIGGGMPVGAFGGRRDIMNCIAPLGPVYQAGTLSGSPVAVAAGLASLRLTQAPGFYDALAARARSLVDGLSGVAREAGVPFSADSIGGMFGIYFSPSVPASFAEVMASDREAFNRFFHAMLDAGHYFAPSAFEAGFVSAAHGEADIQATVAAARACLR</sequence>
<keyword id="KW-0963">Cytoplasm</keyword>
<keyword id="KW-0413">Isomerase</keyword>
<keyword id="KW-0627">Porphyrin biosynthesis</keyword>
<keyword id="KW-0663">Pyridoxal phosphate</keyword>
<keyword id="KW-1185">Reference proteome</keyword>
<name>GSA_AZOSB</name>
<organism>
    <name type="scientific">Azoarcus sp. (strain BH72)</name>
    <dbReference type="NCBI Taxonomy" id="418699"/>
    <lineage>
        <taxon>Bacteria</taxon>
        <taxon>Pseudomonadati</taxon>
        <taxon>Pseudomonadota</taxon>
        <taxon>Betaproteobacteria</taxon>
        <taxon>Rhodocyclales</taxon>
        <taxon>Zoogloeaceae</taxon>
        <taxon>Azoarcus</taxon>
    </lineage>
</organism>